<feature type="chain" id="PRO_0000343944" description="Bidirectional sugar transporter SWEET8">
    <location>
        <begin position="1"/>
        <end position="239"/>
    </location>
</feature>
<feature type="topological domain" description="Extracellular" evidence="2">
    <location>
        <begin position="1"/>
        <end position="6"/>
    </location>
</feature>
<feature type="transmembrane region" description="Helical; Name=1" evidence="2">
    <location>
        <begin position="7"/>
        <end position="27"/>
    </location>
</feature>
<feature type="topological domain" description="Cytoplasmic" evidence="2">
    <location>
        <begin position="28"/>
        <end position="44"/>
    </location>
</feature>
<feature type="transmembrane region" description="Helical; Name=2" evidence="2">
    <location>
        <begin position="45"/>
        <end position="65"/>
    </location>
</feature>
<feature type="topological domain" description="Extracellular" evidence="2">
    <location>
        <begin position="66"/>
        <end position="69"/>
    </location>
</feature>
<feature type="transmembrane region" description="Helical; Name=3" evidence="2">
    <location>
        <begin position="70"/>
        <end position="90"/>
    </location>
</feature>
<feature type="topological domain" description="Cytoplasmic" evidence="2">
    <location>
        <begin position="91"/>
        <end position="103"/>
    </location>
</feature>
<feature type="transmembrane region" description="Helical; Name=4" evidence="2">
    <location>
        <begin position="104"/>
        <end position="124"/>
    </location>
</feature>
<feature type="topological domain" description="Extracellular" evidence="2">
    <location>
        <begin position="125"/>
        <end position="135"/>
    </location>
</feature>
<feature type="transmembrane region" description="Helical; Name=5" evidence="2">
    <location>
        <begin position="136"/>
        <end position="156"/>
    </location>
</feature>
<feature type="topological domain" description="Cytoplasmic" evidence="2">
    <location>
        <begin position="157"/>
        <end position="168"/>
    </location>
</feature>
<feature type="transmembrane region" description="Helical; Name=6" evidence="2">
    <location>
        <begin position="169"/>
        <end position="189"/>
    </location>
</feature>
<feature type="topological domain" description="Extracellular" evidence="2">
    <location>
        <begin position="190"/>
        <end position="194"/>
    </location>
</feature>
<feature type="transmembrane region" description="Helical; Name=7" evidence="2">
    <location>
        <begin position="195"/>
        <end position="215"/>
    </location>
</feature>
<feature type="topological domain" description="Cytoplasmic" evidence="2">
    <location>
        <begin position="216"/>
        <end position="239"/>
    </location>
</feature>
<feature type="domain" description="MtN3/slv 1">
    <location>
        <begin position="9"/>
        <end position="98"/>
    </location>
</feature>
<feature type="domain" description="MtN3/slv 2">
    <location>
        <begin position="134"/>
        <end position="185"/>
    </location>
</feature>
<feature type="splice variant" id="VSP_034712" description="In isoform 2." evidence="10">
    <original>ASNGIGTFLALSQ</original>
    <variation>VIMGLEPFWHFLS</variation>
    <location>
        <begin position="197"/>
        <end position="209"/>
    </location>
</feature>
<feature type="splice variant" id="VSP_034713" description="In isoform 2." evidence="10">
    <location>
        <begin position="210"/>
        <end position="239"/>
    </location>
</feature>
<gene>
    <name evidence="8" type="primary">SWEET8</name>
    <name evidence="7" type="synonym">RPG1</name>
    <name type="ordered locus">At5g40260</name>
    <name type="ORF">MSN9.17</name>
    <name type="ORF">MSN9_160</name>
</gene>
<reference key="1">
    <citation type="journal article" date="2008" name="Plant Physiol.">
        <title>RUPTURED POLLEN GRAIN1, a member of the MtN3/saliva Gene family, is crucial for exine pattern formation and cell integrity of microspores in Arabidopsis.</title>
        <authorList>
            <person name="Guan Y.-F."/>
            <person name="Huang X.-Y."/>
            <person name="Zhu J."/>
            <person name="Gao J.-F."/>
            <person name="Zhang H.-X."/>
            <person name="Yang Z.-N."/>
        </authorList>
    </citation>
    <scope>NUCLEOTIDE SEQUENCE [GENOMIC DNA / MRNA] (ISOFORM 1)</scope>
    <scope>FUNCTION</scope>
    <scope>TISSUE SPECIFICITY</scope>
    <scope>SUBCELLULAR LOCATION</scope>
    <scope>DISRUPTION PHENOTYPE</scope>
    <scope>DEVELOPMENTAL STAGE</scope>
</reference>
<reference key="2">
    <citation type="journal article" date="1998" name="DNA Res.">
        <title>Structural analysis of Arabidopsis thaliana chromosome 5. V. Sequence features of the regions of 1,381,565 bp covered by twenty one physically assigned P1 and TAC clones.</title>
        <authorList>
            <person name="Kaneko T."/>
            <person name="Kotani H."/>
            <person name="Nakamura Y."/>
            <person name="Sato S."/>
            <person name="Asamizu E."/>
            <person name="Miyajima N."/>
            <person name="Tabata S."/>
        </authorList>
    </citation>
    <scope>NUCLEOTIDE SEQUENCE [LARGE SCALE GENOMIC DNA]</scope>
    <source>
        <strain>cv. Columbia</strain>
    </source>
</reference>
<reference key="3">
    <citation type="journal article" date="2017" name="Plant J.">
        <title>Araport11: a complete reannotation of the Arabidopsis thaliana reference genome.</title>
        <authorList>
            <person name="Cheng C.Y."/>
            <person name="Krishnakumar V."/>
            <person name="Chan A.P."/>
            <person name="Thibaud-Nissen F."/>
            <person name="Schobel S."/>
            <person name="Town C.D."/>
        </authorList>
    </citation>
    <scope>GENOME REANNOTATION</scope>
    <source>
        <strain>cv. Columbia</strain>
    </source>
</reference>
<reference key="4">
    <citation type="journal article" date="2002" name="Science">
        <title>Functional annotation of a full-length Arabidopsis cDNA collection.</title>
        <authorList>
            <person name="Seki M."/>
            <person name="Narusaka M."/>
            <person name="Kamiya A."/>
            <person name="Ishida J."/>
            <person name="Satou M."/>
            <person name="Sakurai T."/>
            <person name="Nakajima M."/>
            <person name="Enju A."/>
            <person name="Akiyama K."/>
            <person name="Oono Y."/>
            <person name="Muramatsu M."/>
            <person name="Hayashizaki Y."/>
            <person name="Kawai J."/>
            <person name="Carninci P."/>
            <person name="Itoh M."/>
            <person name="Ishii Y."/>
            <person name="Arakawa T."/>
            <person name="Shibata K."/>
            <person name="Shinagawa A."/>
            <person name="Shinozaki K."/>
        </authorList>
    </citation>
    <scope>NUCLEOTIDE SEQUENCE [LARGE SCALE MRNA] (ISOFORM 1)</scope>
    <source>
        <strain>cv. Columbia</strain>
    </source>
</reference>
<reference key="5">
    <citation type="journal article" date="2003" name="Science">
        <title>Empirical analysis of transcriptional activity in the Arabidopsis genome.</title>
        <authorList>
            <person name="Yamada K."/>
            <person name="Lim J."/>
            <person name="Dale J.M."/>
            <person name="Chen H."/>
            <person name="Shinn P."/>
            <person name="Palm C.J."/>
            <person name="Southwick A.M."/>
            <person name="Wu H.C."/>
            <person name="Kim C.J."/>
            <person name="Nguyen M."/>
            <person name="Pham P.K."/>
            <person name="Cheuk R.F."/>
            <person name="Karlin-Newmann G."/>
            <person name="Liu S.X."/>
            <person name="Lam B."/>
            <person name="Sakano H."/>
            <person name="Wu T."/>
            <person name="Yu G."/>
            <person name="Miranda M."/>
            <person name="Quach H.L."/>
            <person name="Tripp M."/>
            <person name="Chang C.H."/>
            <person name="Lee J.M."/>
            <person name="Toriumi M.J."/>
            <person name="Chan M.M."/>
            <person name="Tang C.C."/>
            <person name="Onodera C.S."/>
            <person name="Deng J.M."/>
            <person name="Akiyama K."/>
            <person name="Ansari Y."/>
            <person name="Arakawa T."/>
            <person name="Banh J."/>
            <person name="Banno F."/>
            <person name="Bowser L."/>
            <person name="Brooks S.Y."/>
            <person name="Carninci P."/>
            <person name="Chao Q."/>
            <person name="Choy N."/>
            <person name="Enju A."/>
            <person name="Goldsmith A.D."/>
            <person name="Gurjal M."/>
            <person name="Hansen N.F."/>
            <person name="Hayashizaki Y."/>
            <person name="Johnson-Hopson C."/>
            <person name="Hsuan V.W."/>
            <person name="Iida K."/>
            <person name="Karnes M."/>
            <person name="Khan S."/>
            <person name="Koesema E."/>
            <person name="Ishida J."/>
            <person name="Jiang P.X."/>
            <person name="Jones T."/>
            <person name="Kawai J."/>
            <person name="Kamiya A."/>
            <person name="Meyers C."/>
            <person name="Nakajima M."/>
            <person name="Narusaka M."/>
            <person name="Seki M."/>
            <person name="Sakurai T."/>
            <person name="Satou M."/>
            <person name="Tamse R."/>
            <person name="Vaysberg M."/>
            <person name="Wallender E.K."/>
            <person name="Wong C."/>
            <person name="Yamamura Y."/>
            <person name="Yuan S."/>
            <person name="Shinozaki K."/>
            <person name="Davis R.W."/>
            <person name="Theologis A."/>
            <person name="Ecker J.R."/>
        </authorList>
    </citation>
    <scope>NUCLEOTIDE SEQUENCE [LARGE SCALE MRNA] (ISOFORM 1)</scope>
    <source>
        <strain>cv. Columbia</strain>
    </source>
</reference>
<reference key="6">
    <citation type="submission" date="2002-03" db="EMBL/GenBank/DDBJ databases">
        <title>Full-length cDNA from Arabidopsis thaliana.</title>
        <authorList>
            <person name="Brover V.V."/>
            <person name="Troukhan M.E."/>
            <person name="Alexandrov N.A."/>
            <person name="Lu Y.-P."/>
            <person name="Flavell R.B."/>
            <person name="Feldmann K.A."/>
        </authorList>
    </citation>
    <scope>NUCLEOTIDE SEQUENCE [LARGE SCALE MRNA] (ISOFORM 1)</scope>
</reference>
<reference key="7">
    <citation type="journal article" date="2005" name="Plant Physiol.">
        <title>Analysis of the female gametophyte transcriptome of Arabidopsis by comparative expression profiling.</title>
        <authorList>
            <person name="Yu H.-J."/>
            <person name="Hogan P."/>
            <person name="Sundaresan V."/>
        </authorList>
    </citation>
    <scope>TISSUE SPECIFICITY</scope>
</reference>
<reference key="8">
    <citation type="journal article" date="2010" name="Nature">
        <title>Sugar transporters for intercellular exchange and nutrition of pathogens.</title>
        <authorList>
            <person name="Chen L.-Q."/>
            <person name="Hou B.-H."/>
            <person name="Lalonde S."/>
            <person name="Takanaga H."/>
            <person name="Hartung M.L."/>
            <person name="Qu X.-Q."/>
            <person name="Guo W.-J."/>
            <person name="Kim J.-G."/>
            <person name="Underwood W."/>
            <person name="Chaudhuri B."/>
            <person name="Chermak D."/>
            <person name="Antony G."/>
            <person name="White F.F."/>
            <person name="Somerville S.C."/>
            <person name="Mudgett M.B."/>
            <person name="Frommer W.B."/>
        </authorList>
    </citation>
    <scope>INDUCTION BY PATHOGENS</scope>
    <scope>GENE FAMILY</scope>
    <scope>NOMENCLATURE</scope>
    <source>
        <strain>cv. Columbia</strain>
    </source>
</reference>
<reference key="9">
    <citation type="journal article" date="2013" name="Proc. Natl. Acad. Sci. U.S.A.">
        <title>Functional role of oligomerization for bacterial and plant SWEET sugar transporter family.</title>
        <authorList>
            <person name="Xuan Y.H."/>
            <person name="Hu Y.B."/>
            <person name="Chen L.-Q."/>
            <person name="Sosso D."/>
            <person name="Ducat D.C."/>
            <person name="Hou B.-H."/>
            <person name="Frommer W.B."/>
        </authorList>
    </citation>
    <scope>SUBUNIT</scope>
    <scope>INTERACTION WITH SWEET4; SWEET5; SWEET6; SWEET7; SWEET9; SWEET10; SWEET11; SWEET13; SWEET15; SWEET16 AND SWEET17</scope>
    <scope>SUBCELLULAR LOCATION</scope>
</reference>
<reference key="10">
    <citation type="journal article" date="2015" name="Curr. Opin. Plant Biol.">
        <title>SWEETs, transporters for intracellular and intercellular sugar translocation.</title>
        <authorList>
            <person name="Eom J.-S."/>
            <person name="Chen L.-Q."/>
            <person name="Sosso D."/>
            <person name="Julius B.T."/>
            <person name="Lin I.W."/>
            <person name="Qu X.-Q."/>
            <person name="Braun D.M."/>
            <person name="Frommer W.B."/>
        </authorList>
    </citation>
    <scope>REVIEW</scope>
    <source>
        <strain>cv. Columbia</strain>
    </source>
</reference>
<sequence length="239" mass="26886">MVDAKQVRFIIGVIGNVISFGLFAAPAKTFWRIFKKKSVEEFSYVPYVATVMNCMLWVFYGLPVVHKDSILVSTINGVGLVIELFYVGVYLMYCGHKKNHRRNILGFLALEVILVVAIILITLFALKGDFVKQTFVGVICDVFNIAMYGAPSLAIIKVVKTKSVEYMPFLLSLVCFVNAGIWTTYSLIFKIDYYVLASNGIGTFLALSQLIVYFMYYKSTPKEKTVKPSEVEISATERV</sequence>
<organism>
    <name type="scientific">Arabidopsis thaliana</name>
    <name type="common">Mouse-ear cress</name>
    <dbReference type="NCBI Taxonomy" id="3702"/>
    <lineage>
        <taxon>Eukaryota</taxon>
        <taxon>Viridiplantae</taxon>
        <taxon>Streptophyta</taxon>
        <taxon>Embryophyta</taxon>
        <taxon>Tracheophyta</taxon>
        <taxon>Spermatophyta</taxon>
        <taxon>Magnoliopsida</taxon>
        <taxon>eudicotyledons</taxon>
        <taxon>Gunneridae</taxon>
        <taxon>Pentapetalae</taxon>
        <taxon>rosids</taxon>
        <taxon>malvids</taxon>
        <taxon>Brassicales</taxon>
        <taxon>Brassicaceae</taxon>
        <taxon>Camelineae</taxon>
        <taxon>Arabidopsis</taxon>
    </lineage>
</organism>
<proteinExistence type="evidence at protein level"/>
<comment type="function">
    <text evidence="1 4 9">Mediates both low-affinity uptake and efflux of sugar across the plasma membrane. Required, in pollen, for microspore cell integrity and primexine pattern formation (PubMed:18434608, PubMed:25988582).</text>
</comment>
<comment type="subunit">
    <text evidence="6">Forms homooligomers and heterooligomers with SWEET4, SWEET5, SWEET6, SWEET7, SWEET9, SWEET10, SWEET11, SWEET13, SWEET15, SWEET16 and SWEET17.</text>
</comment>
<comment type="subcellular location">
    <subcellularLocation>
        <location evidence="4 6">Cell membrane</location>
        <topology evidence="4">Multi-pass membrane protein</topology>
    </subcellularLocation>
</comment>
<comment type="alternative products">
    <event type="alternative splicing"/>
    <isoform>
        <id>Q8LFH5-1</id>
        <name>1</name>
        <sequence type="displayed"/>
    </isoform>
    <isoform>
        <id>Q8LFH5-2</id>
        <name>2</name>
        <sequence type="described" ref="VSP_034712 VSP_034713"/>
    </isoform>
</comment>
<comment type="tissue specificity">
    <text evidence="3 4">Expressed in inflorescences, embryo sacs and pollen, and at a lower level in stems. Barely detected in roots, leaves and seedlings.</text>
</comment>
<comment type="developmental stage">
    <text evidence="4">Expressed during anther development in tapetal cells and microsporocytes during meiosis. When the tapetum degenerates, detected only in pollen grains.</text>
</comment>
<comment type="induction">
    <text evidence="5">Induced by the pathogenic bacteria P.syringae pv. tomato.</text>
</comment>
<comment type="disruption phenotype">
    <text evidence="4">Dramatically reduced fertility due to a postmeiotic rupture of microspores.</text>
</comment>
<comment type="miscellaneous">
    <molecule>Isoform 2</molecule>
    <text evidence="11">Not detected in inflorescence (PubMed:18434608).</text>
</comment>
<comment type="similarity">
    <text evidence="10">Belongs to the SWEET sugar transporter family.</text>
</comment>
<comment type="sequence caution" evidence="10">
    <conflict type="erroneous gene model prediction">
        <sequence resource="EMBL-CDS" id="BAB10907"/>
    </conflict>
</comment>
<protein>
    <recommendedName>
        <fullName evidence="8">Bidirectional sugar transporter SWEET8</fullName>
        <shortName evidence="8">AtSWEET8</shortName>
    </recommendedName>
    <alternativeName>
        <fullName evidence="7">Protein RUPTURED POLLEN GRAIN 1</fullName>
    </alternativeName>
    <alternativeName>
        <fullName evidence="8">Protein SUGARS WILL EVENTUALLY BE EXPORTED TRANSPORTERS 8</fullName>
    </alternativeName>
</protein>
<keyword id="KW-0025">Alternative splicing</keyword>
<keyword id="KW-1003">Cell membrane</keyword>
<keyword id="KW-0472">Membrane</keyword>
<keyword id="KW-1185">Reference proteome</keyword>
<keyword id="KW-0677">Repeat</keyword>
<keyword id="KW-0762">Sugar transport</keyword>
<keyword id="KW-0812">Transmembrane</keyword>
<keyword id="KW-1133">Transmembrane helix</keyword>
<keyword id="KW-0813">Transport</keyword>
<name>SWET8_ARATH</name>
<evidence type="ECO:0000250" key="1">
    <source>
        <dbReference type="UniProtKB" id="Q8L9J7"/>
    </source>
</evidence>
<evidence type="ECO:0000255" key="2"/>
<evidence type="ECO:0000269" key="3">
    <source>
    </source>
</evidence>
<evidence type="ECO:0000269" key="4">
    <source>
    </source>
</evidence>
<evidence type="ECO:0000269" key="5">
    <source>
    </source>
</evidence>
<evidence type="ECO:0000269" key="6">
    <source>
    </source>
</evidence>
<evidence type="ECO:0000303" key="7">
    <source>
    </source>
</evidence>
<evidence type="ECO:0000303" key="8">
    <source>
    </source>
</evidence>
<evidence type="ECO:0000303" key="9">
    <source>
    </source>
</evidence>
<evidence type="ECO:0000305" key="10"/>
<evidence type="ECO:0000305" key="11">
    <source>
    </source>
</evidence>
<accession>Q8LFH5</accession>
<accession>Q2V2R4</accession>
<accession>Q9FL06</accession>
<dbReference type="EMBL" id="AB010699">
    <property type="protein sequence ID" value="BAB10907.1"/>
    <property type="status" value="ALT_SEQ"/>
    <property type="molecule type" value="Genomic_DNA"/>
</dbReference>
<dbReference type="EMBL" id="CP002688">
    <property type="protein sequence ID" value="AED94526.1"/>
    <property type="molecule type" value="Genomic_DNA"/>
</dbReference>
<dbReference type="EMBL" id="CP002688">
    <property type="protein sequence ID" value="AED94527.1"/>
    <property type="molecule type" value="Genomic_DNA"/>
</dbReference>
<dbReference type="EMBL" id="AK118347">
    <property type="protein sequence ID" value="BAC42961.1"/>
    <property type="molecule type" value="mRNA"/>
</dbReference>
<dbReference type="EMBL" id="BT005477">
    <property type="protein sequence ID" value="AAO63897.1"/>
    <property type="molecule type" value="mRNA"/>
</dbReference>
<dbReference type="EMBL" id="AY084840">
    <property type="protein sequence ID" value="AAM61405.1"/>
    <property type="molecule type" value="mRNA"/>
</dbReference>
<dbReference type="RefSeq" id="NP_001031986.1">
    <molecule id="Q8LFH5-2"/>
    <property type="nucleotide sequence ID" value="NM_001036909.1"/>
</dbReference>
<dbReference type="RefSeq" id="NP_568579.1">
    <molecule id="Q8LFH5-1"/>
    <property type="nucleotide sequence ID" value="NM_123390.3"/>
</dbReference>
<dbReference type="SMR" id="Q8LFH5"/>
<dbReference type="BioGRID" id="19275">
    <property type="interactions" value="12"/>
</dbReference>
<dbReference type="FunCoup" id="Q8LFH5">
    <property type="interactions" value="408"/>
</dbReference>
<dbReference type="IntAct" id="Q8LFH5">
    <property type="interactions" value="2"/>
</dbReference>
<dbReference type="STRING" id="3702.Q8LFH5"/>
<dbReference type="TCDB" id="2.A.123.1.5">
    <property type="family name" value="the sweet, pq-loop, saliva, mtn3 (sweet) family"/>
</dbReference>
<dbReference type="PaxDb" id="3702-AT5G40260.1"/>
<dbReference type="ProteomicsDB" id="226555">
    <molecule id="Q8LFH5-1"/>
</dbReference>
<dbReference type="EnsemblPlants" id="AT5G40260.1">
    <molecule id="Q8LFH5-1"/>
    <property type="protein sequence ID" value="AT5G40260.1"/>
    <property type="gene ID" value="AT5G40260"/>
</dbReference>
<dbReference type="EnsemblPlants" id="AT5G40260.2">
    <molecule id="Q8LFH5-2"/>
    <property type="protein sequence ID" value="AT5G40260.2"/>
    <property type="gene ID" value="AT5G40260"/>
</dbReference>
<dbReference type="GeneID" id="834024"/>
<dbReference type="Gramene" id="AT5G40260.1">
    <molecule id="Q8LFH5-1"/>
    <property type="protein sequence ID" value="AT5G40260.1"/>
    <property type="gene ID" value="AT5G40260"/>
</dbReference>
<dbReference type="Gramene" id="AT5G40260.2">
    <molecule id="Q8LFH5-2"/>
    <property type="protein sequence ID" value="AT5G40260.2"/>
    <property type="gene ID" value="AT5G40260"/>
</dbReference>
<dbReference type="KEGG" id="ath:AT5G40260"/>
<dbReference type="Araport" id="AT5G40260"/>
<dbReference type="TAIR" id="AT5G40260">
    <property type="gene designation" value="SWEET8"/>
</dbReference>
<dbReference type="eggNOG" id="KOG1623">
    <property type="taxonomic scope" value="Eukaryota"/>
</dbReference>
<dbReference type="HOGENOM" id="CLU_048643_1_0_1"/>
<dbReference type="InParanoid" id="Q8LFH5"/>
<dbReference type="OMA" id="ICWAGYA"/>
<dbReference type="PhylomeDB" id="Q8LFH5"/>
<dbReference type="PRO" id="PR:Q8LFH5"/>
<dbReference type="Proteomes" id="UP000006548">
    <property type="component" value="Chromosome 5"/>
</dbReference>
<dbReference type="ExpressionAtlas" id="Q8LFH5">
    <property type="expression patterns" value="baseline and differential"/>
</dbReference>
<dbReference type="GO" id="GO:0005886">
    <property type="term" value="C:plasma membrane"/>
    <property type="evidence" value="ECO:0000314"/>
    <property type="project" value="UniProtKB"/>
</dbReference>
<dbReference type="GO" id="GO:0051119">
    <property type="term" value="F:sugar transmembrane transporter activity"/>
    <property type="evidence" value="ECO:0000250"/>
    <property type="project" value="UniProtKB"/>
</dbReference>
<dbReference type="GO" id="GO:0052543">
    <property type="term" value="P:callose deposition in cell wall"/>
    <property type="evidence" value="ECO:0000315"/>
    <property type="project" value="TAIR"/>
</dbReference>
<dbReference type="GO" id="GO:0009555">
    <property type="term" value="P:pollen development"/>
    <property type="evidence" value="ECO:0000315"/>
    <property type="project" value="TAIR"/>
</dbReference>
<dbReference type="GO" id="GO:0010584">
    <property type="term" value="P:pollen exine formation"/>
    <property type="evidence" value="ECO:0000315"/>
    <property type="project" value="TAIR"/>
</dbReference>
<dbReference type="GO" id="GO:0010208">
    <property type="term" value="P:pollen wall assembly"/>
    <property type="evidence" value="ECO:0000315"/>
    <property type="project" value="TAIR"/>
</dbReference>
<dbReference type="GO" id="GO:0051260">
    <property type="term" value="P:protein homooligomerization"/>
    <property type="evidence" value="ECO:0000314"/>
    <property type="project" value="UniProtKB"/>
</dbReference>
<dbReference type="FunFam" id="1.20.1280.290:FF:000001">
    <property type="entry name" value="Bidirectional sugar transporter SWEET"/>
    <property type="match status" value="1"/>
</dbReference>
<dbReference type="FunFam" id="1.20.1280.290:FF:000002">
    <property type="entry name" value="Bidirectional sugar transporter SWEET"/>
    <property type="match status" value="1"/>
</dbReference>
<dbReference type="Gene3D" id="1.20.1280.290">
    <property type="match status" value="2"/>
</dbReference>
<dbReference type="InterPro" id="IPR047664">
    <property type="entry name" value="SWEET"/>
</dbReference>
<dbReference type="InterPro" id="IPR004316">
    <property type="entry name" value="SWEET_rpt"/>
</dbReference>
<dbReference type="PANTHER" id="PTHR10791:SF236">
    <property type="entry name" value="BIDIRECTIONAL SUGAR TRANSPORTER SWEET8"/>
    <property type="match status" value="1"/>
</dbReference>
<dbReference type="PANTHER" id="PTHR10791">
    <property type="entry name" value="RAG1-ACTIVATING PROTEIN 1"/>
    <property type="match status" value="1"/>
</dbReference>
<dbReference type="Pfam" id="PF03083">
    <property type="entry name" value="MtN3_slv"/>
    <property type="match status" value="2"/>
</dbReference>